<keyword id="KW-0963">Cytoplasm</keyword>
<keyword id="KW-0275">Fatty acid biosynthesis</keyword>
<keyword id="KW-0276">Fatty acid metabolism</keyword>
<keyword id="KW-0444">Lipid biosynthesis</keyword>
<keyword id="KW-0443">Lipid metabolism</keyword>
<keyword id="KW-0596">Phosphopantetheine</keyword>
<keyword id="KW-0597">Phosphoprotein</keyword>
<keyword id="KW-1185">Reference proteome</keyword>
<name>ACP_FUSNN</name>
<dbReference type="EMBL" id="AE009951">
    <property type="protein sequence ID" value="AAL94356.1"/>
    <property type="molecule type" value="Genomic_DNA"/>
</dbReference>
<dbReference type="RefSeq" id="NP_603057.1">
    <property type="nucleotide sequence ID" value="NC_003454.1"/>
</dbReference>
<dbReference type="RefSeq" id="WP_005902726.1">
    <property type="nucleotide sequence ID" value="NZ_OZ209243.1"/>
</dbReference>
<dbReference type="SMR" id="Q8RGX5"/>
<dbReference type="FunCoup" id="Q8RGX5">
    <property type="interactions" value="287"/>
</dbReference>
<dbReference type="STRING" id="190304.FN0150"/>
<dbReference type="PaxDb" id="190304-FN0150"/>
<dbReference type="EnsemblBacteria" id="AAL94356">
    <property type="protein sequence ID" value="AAL94356"/>
    <property type="gene ID" value="FN0150"/>
</dbReference>
<dbReference type="GeneID" id="79783170"/>
<dbReference type="KEGG" id="fnu:FN0150"/>
<dbReference type="PATRIC" id="fig|190304.8.peg.730"/>
<dbReference type="eggNOG" id="COG0236">
    <property type="taxonomic scope" value="Bacteria"/>
</dbReference>
<dbReference type="HOGENOM" id="CLU_108696_5_1_0"/>
<dbReference type="InParanoid" id="Q8RGX5"/>
<dbReference type="BioCyc" id="FNUC190304:G1FZS-753-MONOMER"/>
<dbReference type="UniPathway" id="UPA00094"/>
<dbReference type="Proteomes" id="UP000002521">
    <property type="component" value="Chromosome"/>
</dbReference>
<dbReference type="GO" id="GO:0005829">
    <property type="term" value="C:cytosol"/>
    <property type="evidence" value="ECO:0000318"/>
    <property type="project" value="GO_Central"/>
</dbReference>
<dbReference type="GO" id="GO:0016020">
    <property type="term" value="C:membrane"/>
    <property type="evidence" value="ECO:0007669"/>
    <property type="project" value="GOC"/>
</dbReference>
<dbReference type="GO" id="GO:0000035">
    <property type="term" value="F:acyl binding"/>
    <property type="evidence" value="ECO:0000318"/>
    <property type="project" value="GO_Central"/>
</dbReference>
<dbReference type="GO" id="GO:0000036">
    <property type="term" value="F:acyl carrier activity"/>
    <property type="evidence" value="ECO:0000318"/>
    <property type="project" value="GO_Central"/>
</dbReference>
<dbReference type="GO" id="GO:0031177">
    <property type="term" value="F:phosphopantetheine binding"/>
    <property type="evidence" value="ECO:0007669"/>
    <property type="project" value="InterPro"/>
</dbReference>
<dbReference type="GO" id="GO:0009245">
    <property type="term" value="P:lipid A biosynthetic process"/>
    <property type="evidence" value="ECO:0000318"/>
    <property type="project" value="GO_Central"/>
</dbReference>
<dbReference type="FunFam" id="1.10.1200.10:FF:000001">
    <property type="entry name" value="Acyl carrier protein"/>
    <property type="match status" value="1"/>
</dbReference>
<dbReference type="Gene3D" id="1.10.1200.10">
    <property type="entry name" value="ACP-like"/>
    <property type="match status" value="1"/>
</dbReference>
<dbReference type="HAMAP" id="MF_01217">
    <property type="entry name" value="Acyl_carrier"/>
    <property type="match status" value="1"/>
</dbReference>
<dbReference type="InterPro" id="IPR003231">
    <property type="entry name" value="ACP"/>
</dbReference>
<dbReference type="InterPro" id="IPR036736">
    <property type="entry name" value="ACP-like_sf"/>
</dbReference>
<dbReference type="InterPro" id="IPR020806">
    <property type="entry name" value="PKS_PP-bd"/>
</dbReference>
<dbReference type="InterPro" id="IPR009081">
    <property type="entry name" value="PP-bd_ACP"/>
</dbReference>
<dbReference type="InterPro" id="IPR006162">
    <property type="entry name" value="Ppantetheine_attach_site"/>
</dbReference>
<dbReference type="NCBIfam" id="TIGR00517">
    <property type="entry name" value="acyl_carrier"/>
    <property type="match status" value="1"/>
</dbReference>
<dbReference type="NCBIfam" id="NF002148">
    <property type="entry name" value="PRK00982.1-2"/>
    <property type="match status" value="1"/>
</dbReference>
<dbReference type="NCBIfam" id="NF002149">
    <property type="entry name" value="PRK00982.1-3"/>
    <property type="match status" value="1"/>
</dbReference>
<dbReference type="NCBIfam" id="NF002150">
    <property type="entry name" value="PRK00982.1-4"/>
    <property type="match status" value="1"/>
</dbReference>
<dbReference type="NCBIfam" id="NF002151">
    <property type="entry name" value="PRK00982.1-5"/>
    <property type="match status" value="1"/>
</dbReference>
<dbReference type="PANTHER" id="PTHR20863">
    <property type="entry name" value="ACYL CARRIER PROTEIN"/>
    <property type="match status" value="1"/>
</dbReference>
<dbReference type="PANTHER" id="PTHR20863:SF76">
    <property type="entry name" value="CARRIER DOMAIN-CONTAINING PROTEIN"/>
    <property type="match status" value="1"/>
</dbReference>
<dbReference type="Pfam" id="PF00550">
    <property type="entry name" value="PP-binding"/>
    <property type="match status" value="1"/>
</dbReference>
<dbReference type="SMART" id="SM00823">
    <property type="entry name" value="PKS_PP"/>
    <property type="match status" value="1"/>
</dbReference>
<dbReference type="SUPFAM" id="SSF47336">
    <property type="entry name" value="ACP-like"/>
    <property type="match status" value="1"/>
</dbReference>
<dbReference type="PROSITE" id="PS50075">
    <property type="entry name" value="CARRIER"/>
    <property type="match status" value="1"/>
</dbReference>
<dbReference type="PROSITE" id="PS00012">
    <property type="entry name" value="PHOSPHOPANTETHEINE"/>
    <property type="match status" value="1"/>
</dbReference>
<organism>
    <name type="scientific">Fusobacterium nucleatum subsp. nucleatum (strain ATCC 25586 / DSM 15643 / BCRC 10681 / CIP 101130 / JCM 8532 / KCTC 2640 / LMG 13131 / VPI 4355)</name>
    <dbReference type="NCBI Taxonomy" id="190304"/>
    <lineage>
        <taxon>Bacteria</taxon>
        <taxon>Fusobacteriati</taxon>
        <taxon>Fusobacteriota</taxon>
        <taxon>Fusobacteriia</taxon>
        <taxon>Fusobacteriales</taxon>
        <taxon>Fusobacteriaceae</taxon>
        <taxon>Fusobacterium</taxon>
    </lineage>
</organism>
<protein>
    <recommendedName>
        <fullName evidence="1">Acyl carrier protein</fullName>
        <shortName evidence="1">ACP</shortName>
    </recommendedName>
</protein>
<reference key="1">
    <citation type="journal article" date="2002" name="J. Bacteriol.">
        <title>Genome sequence and analysis of the oral bacterium Fusobacterium nucleatum strain ATCC 25586.</title>
        <authorList>
            <person name="Kapatral V."/>
            <person name="Anderson I."/>
            <person name="Ivanova N."/>
            <person name="Reznik G."/>
            <person name="Los T."/>
            <person name="Lykidis A."/>
            <person name="Bhattacharyya A."/>
            <person name="Bartman A."/>
            <person name="Gardner W."/>
            <person name="Grechkin G."/>
            <person name="Zhu L."/>
            <person name="Vasieva O."/>
            <person name="Chu L."/>
            <person name="Kogan Y."/>
            <person name="Chaga O."/>
            <person name="Goltsman E."/>
            <person name="Bernal A."/>
            <person name="Larsen N."/>
            <person name="D'Souza M."/>
            <person name="Walunas T."/>
            <person name="Pusch G."/>
            <person name="Haselkorn R."/>
            <person name="Fonstein M."/>
            <person name="Kyrpides N.C."/>
            <person name="Overbeek R."/>
        </authorList>
    </citation>
    <scope>NUCLEOTIDE SEQUENCE [LARGE SCALE GENOMIC DNA]</scope>
    <source>
        <strain>ATCC 25586 / DSM 15643 / BCRC 10681 / CIP 101130 / JCM 8532 / KCTC 2640 / LMG 13131 / VPI 4355</strain>
    </source>
</reference>
<evidence type="ECO:0000255" key="1">
    <source>
        <dbReference type="HAMAP-Rule" id="MF_01217"/>
    </source>
</evidence>
<evidence type="ECO:0000255" key="2">
    <source>
        <dbReference type="PROSITE-ProRule" id="PRU00258"/>
    </source>
</evidence>
<gene>
    <name evidence="1" type="primary">acpP</name>
    <name type="ordered locus">FN0150</name>
</gene>
<comment type="function">
    <text evidence="1">Carrier of the growing fatty acid chain in fatty acid biosynthesis.</text>
</comment>
<comment type="pathway">
    <text evidence="1">Lipid metabolism; fatty acid biosynthesis.</text>
</comment>
<comment type="subcellular location">
    <subcellularLocation>
        <location evidence="1">Cytoplasm</location>
    </subcellularLocation>
</comment>
<comment type="PTM">
    <text evidence="1">4'-phosphopantetheine is transferred from CoA to a specific serine of apo-ACP by AcpS. This modification is essential for activity because fatty acids are bound in thioester linkage to the sulfhydryl of the prosthetic group.</text>
</comment>
<comment type="similarity">
    <text evidence="1">Belongs to the acyl carrier protein (ACP) family.</text>
</comment>
<accession>Q8RGX5</accession>
<sequence length="75" mass="8443">MLDKVKEIIVEQLGVDADQIKPESNFVDDLGADSLDTVELIMSFEEEFGVEIPDTEAEKIKTVQDVINYIEANKK</sequence>
<proteinExistence type="inferred from homology"/>
<feature type="chain" id="PRO_0000180139" description="Acyl carrier protein">
    <location>
        <begin position="1"/>
        <end position="75"/>
    </location>
</feature>
<feature type="domain" description="Carrier" evidence="2">
    <location>
        <begin position="1"/>
        <end position="74"/>
    </location>
</feature>
<feature type="modified residue" description="O-(pantetheine 4'-phosphoryl)serine" evidence="2">
    <location>
        <position position="34"/>
    </location>
</feature>